<comment type="function">
    <text evidence="1">Involved in the import of nuclear-targeted proteins into the nucleus and the export of poly(A) RNA out of the nucleus. Has a role in the endoplasmic reticulum-associated degradation (ERAD) pathway (By similarity).</text>
</comment>
<comment type="subcellular location">
    <subcellularLocation>
        <location evidence="1">Cytoplasm</location>
        <location evidence="1">Perinuclear region</location>
    </subcellularLocation>
    <subcellularLocation>
        <location evidence="1">Endoplasmic reticulum membrane</location>
        <topology evidence="1">Peripheral membrane protein</topology>
        <orientation evidence="1">Cytoplasmic side</orientation>
    </subcellularLocation>
    <subcellularLocation>
        <location evidence="1">Nucleus membrane</location>
        <topology evidence="1">Peripheral membrane protein</topology>
        <orientation evidence="1">Cytoplasmic side</orientation>
    </subcellularLocation>
    <text evidence="1">Localizes mainly at the nuclear periphery and the endoplasmic reticulum membrane.</text>
</comment>
<comment type="similarity">
    <text evidence="4">Belongs to the NPL4 family.</text>
</comment>
<reference key="1">
    <citation type="journal article" date="2005" name="Nature">
        <title>Genomic sequence of the pathogenic and allergenic filamentous fungus Aspergillus fumigatus.</title>
        <authorList>
            <person name="Nierman W.C."/>
            <person name="Pain A."/>
            <person name="Anderson M.J."/>
            <person name="Wortman J.R."/>
            <person name="Kim H.S."/>
            <person name="Arroyo J."/>
            <person name="Berriman M."/>
            <person name="Abe K."/>
            <person name="Archer D.B."/>
            <person name="Bermejo C."/>
            <person name="Bennett J.W."/>
            <person name="Bowyer P."/>
            <person name="Chen D."/>
            <person name="Collins M."/>
            <person name="Coulsen R."/>
            <person name="Davies R."/>
            <person name="Dyer P.S."/>
            <person name="Farman M.L."/>
            <person name="Fedorova N."/>
            <person name="Fedorova N.D."/>
            <person name="Feldblyum T.V."/>
            <person name="Fischer R."/>
            <person name="Fosker N."/>
            <person name="Fraser A."/>
            <person name="Garcia J.L."/>
            <person name="Garcia M.J."/>
            <person name="Goble A."/>
            <person name="Goldman G.H."/>
            <person name="Gomi K."/>
            <person name="Griffith-Jones S."/>
            <person name="Gwilliam R."/>
            <person name="Haas B.J."/>
            <person name="Haas H."/>
            <person name="Harris D.E."/>
            <person name="Horiuchi H."/>
            <person name="Huang J."/>
            <person name="Humphray S."/>
            <person name="Jimenez J."/>
            <person name="Keller N."/>
            <person name="Khouri H."/>
            <person name="Kitamoto K."/>
            <person name="Kobayashi T."/>
            <person name="Konzack S."/>
            <person name="Kulkarni R."/>
            <person name="Kumagai T."/>
            <person name="Lafton A."/>
            <person name="Latge J.-P."/>
            <person name="Li W."/>
            <person name="Lord A."/>
            <person name="Lu C."/>
            <person name="Majoros W.H."/>
            <person name="May G.S."/>
            <person name="Miller B.L."/>
            <person name="Mohamoud Y."/>
            <person name="Molina M."/>
            <person name="Monod M."/>
            <person name="Mouyna I."/>
            <person name="Mulligan S."/>
            <person name="Murphy L.D."/>
            <person name="O'Neil S."/>
            <person name="Paulsen I."/>
            <person name="Penalva M.A."/>
            <person name="Pertea M."/>
            <person name="Price C."/>
            <person name="Pritchard B.L."/>
            <person name="Quail M.A."/>
            <person name="Rabbinowitsch E."/>
            <person name="Rawlins N."/>
            <person name="Rajandream M.A."/>
            <person name="Reichard U."/>
            <person name="Renauld H."/>
            <person name="Robson G.D."/>
            <person name="Rodriguez de Cordoba S."/>
            <person name="Rodriguez-Pena J.M."/>
            <person name="Ronning C.M."/>
            <person name="Rutter S."/>
            <person name="Salzberg S.L."/>
            <person name="Sanchez M."/>
            <person name="Sanchez-Ferrero J.C."/>
            <person name="Saunders D."/>
            <person name="Seeger K."/>
            <person name="Squares R."/>
            <person name="Squares S."/>
            <person name="Takeuchi M."/>
            <person name="Tekaia F."/>
            <person name="Turner G."/>
            <person name="Vazquez de Aldana C.R."/>
            <person name="Weidman J."/>
            <person name="White O."/>
            <person name="Woodward J.R."/>
            <person name="Yu J.-H."/>
            <person name="Fraser C.M."/>
            <person name="Galagan J.E."/>
            <person name="Asai K."/>
            <person name="Machida M."/>
            <person name="Hall N."/>
            <person name="Barrell B.G."/>
            <person name="Denning D.W."/>
        </authorList>
    </citation>
    <scope>NUCLEOTIDE SEQUENCE [LARGE SCALE GENOMIC DNA]</scope>
    <source>
        <strain>ATCC MYA-4609 / CBS 101355 / FGSC A1100 / Af293</strain>
    </source>
</reference>
<gene>
    <name type="primary">npl4</name>
    <name type="ORF">AFUA_1G02830</name>
</gene>
<sequence length="652" mass="73087">MAAARPIILRFESRNGQFRLSVSPQEQFPFLKEKILENLPKDVEPSSLVLSNKPIGTGGQERQLKDLTGVSIERVGLKHGDKLFIGYQDKQASQAAPAQKHVTADVSRRLNGAPVPETETVAFHPPTSPSATIKNPWEVVQQSPLDDMLDKKDGKIYRPRDPKMCKHGPKGMCDYCMPLEPYDPKYLAEKKIKHLSFHSYMRKVNASTNKAELKSSFMPPLTEPYYRVRRDCPSGHPPWPEGICTKCQPSAISLQPQEFRMVDHVEFASPDLINSLLDFWRKSGAQRLGFLYGTYEEYTEVPLGIKAVVQAIYEPPQVDEIDGITLHEWPNEKEVDEVARQCGLEKVGVIFTDLLDAGRGDGSVVCKRHIDSYYLSSLEIAFASRMQAKHPKPTKWSRTGRFGSNFVTCVLSGDEEGAITVSSYQASISAVEMVRADIIEPSAEPSVMLVQSEDEDTDNKSRYIPEVFYRKINEYGVSAQQNAKPSFPVEYLLVTLTHGFPTEASPIFPASTFPIENREVIGESQELRHVAKKLVSHGDPDKAIREVSDFHLLCFLHSLSMFSKEEEALLCRVATTHDPTEGLKLLNTPGWATLVTVLQESGERPPKRPWLNPADPPRPLSQQGKRHLPSRPESPKSESEQLAKRFKGASLE</sequence>
<evidence type="ECO:0000250" key="1"/>
<evidence type="ECO:0000255" key="2">
    <source>
        <dbReference type="PROSITE-ProRule" id="PRU01182"/>
    </source>
</evidence>
<evidence type="ECO:0000256" key="3">
    <source>
        <dbReference type="SAM" id="MobiDB-lite"/>
    </source>
</evidence>
<evidence type="ECO:0000305" key="4"/>
<dbReference type="EMBL" id="AAHF01000007">
    <property type="protein sequence ID" value="EAL87995.1"/>
    <property type="molecule type" value="Genomic_DNA"/>
</dbReference>
<dbReference type="RefSeq" id="XP_750033.1">
    <property type="nucleotide sequence ID" value="XM_744940.1"/>
</dbReference>
<dbReference type="SMR" id="Q4WKD7"/>
<dbReference type="FunCoup" id="Q4WKD7">
    <property type="interactions" value="949"/>
</dbReference>
<dbReference type="STRING" id="330879.Q4WKD7"/>
<dbReference type="EnsemblFungi" id="EAL87995">
    <property type="protein sequence ID" value="EAL87995"/>
    <property type="gene ID" value="AFUA_1G02830"/>
</dbReference>
<dbReference type="GeneID" id="3507825"/>
<dbReference type="KEGG" id="afm:AFUA_1G02830"/>
<dbReference type="VEuPathDB" id="FungiDB:Afu1g02830"/>
<dbReference type="eggNOG" id="KOG2834">
    <property type="taxonomic scope" value="Eukaryota"/>
</dbReference>
<dbReference type="HOGENOM" id="CLU_017172_0_0_1"/>
<dbReference type="InParanoid" id="Q4WKD7"/>
<dbReference type="OMA" id="KWSRTGR"/>
<dbReference type="OrthoDB" id="10251089at2759"/>
<dbReference type="Proteomes" id="UP000002530">
    <property type="component" value="Chromosome 1"/>
</dbReference>
<dbReference type="GO" id="GO:0005789">
    <property type="term" value="C:endoplasmic reticulum membrane"/>
    <property type="evidence" value="ECO:0007669"/>
    <property type="project" value="UniProtKB-SubCell"/>
</dbReference>
<dbReference type="GO" id="GO:0031965">
    <property type="term" value="C:nuclear membrane"/>
    <property type="evidence" value="ECO:0007669"/>
    <property type="project" value="UniProtKB-SubCell"/>
</dbReference>
<dbReference type="GO" id="GO:0005634">
    <property type="term" value="C:nucleus"/>
    <property type="evidence" value="ECO:0000318"/>
    <property type="project" value="GO_Central"/>
</dbReference>
<dbReference type="GO" id="GO:0048471">
    <property type="term" value="C:perinuclear region of cytoplasm"/>
    <property type="evidence" value="ECO:0007669"/>
    <property type="project" value="UniProtKB-SubCell"/>
</dbReference>
<dbReference type="GO" id="GO:0043130">
    <property type="term" value="F:ubiquitin binding"/>
    <property type="evidence" value="ECO:0000318"/>
    <property type="project" value="GO_Central"/>
</dbReference>
<dbReference type="GO" id="GO:0031625">
    <property type="term" value="F:ubiquitin protein ligase binding"/>
    <property type="evidence" value="ECO:0000318"/>
    <property type="project" value="GO_Central"/>
</dbReference>
<dbReference type="GO" id="GO:0051028">
    <property type="term" value="P:mRNA transport"/>
    <property type="evidence" value="ECO:0007669"/>
    <property type="project" value="UniProtKB-KW"/>
</dbReference>
<dbReference type="GO" id="GO:0015031">
    <property type="term" value="P:protein transport"/>
    <property type="evidence" value="ECO:0007669"/>
    <property type="project" value="UniProtKB-KW"/>
</dbReference>
<dbReference type="GO" id="GO:0006511">
    <property type="term" value="P:ubiquitin-dependent protein catabolic process"/>
    <property type="evidence" value="ECO:0000318"/>
    <property type="project" value="GO_Central"/>
</dbReference>
<dbReference type="CDD" id="cd08061">
    <property type="entry name" value="MPN_NPL4"/>
    <property type="match status" value="1"/>
</dbReference>
<dbReference type="FunFam" id="3.10.20.90:FF:000344">
    <property type="entry name" value="Nuclear protein localization protein 4"/>
    <property type="match status" value="1"/>
</dbReference>
<dbReference type="Gene3D" id="3.10.20.90">
    <property type="entry name" value="Phosphatidylinositol 3-kinase Catalytic Subunit, Chain A, domain 1"/>
    <property type="match status" value="1"/>
</dbReference>
<dbReference type="InterPro" id="IPR037518">
    <property type="entry name" value="MPN"/>
</dbReference>
<dbReference type="InterPro" id="IPR016563">
    <property type="entry name" value="Npl4"/>
</dbReference>
<dbReference type="InterPro" id="IPR007717">
    <property type="entry name" value="NPL4_C"/>
</dbReference>
<dbReference type="InterPro" id="IPR007716">
    <property type="entry name" value="NPL4_Zn-bd_put"/>
</dbReference>
<dbReference type="InterPro" id="IPR029071">
    <property type="entry name" value="Ubiquitin-like_domsf"/>
</dbReference>
<dbReference type="PANTHER" id="PTHR12710">
    <property type="entry name" value="NUCLEAR PROTEIN LOCALIZATION 4"/>
    <property type="match status" value="1"/>
</dbReference>
<dbReference type="PANTHER" id="PTHR12710:SF0">
    <property type="entry name" value="NUCLEAR PROTEIN LOCALIZATION PROTEIN 4 HOMOLOG"/>
    <property type="match status" value="1"/>
</dbReference>
<dbReference type="Pfam" id="PF05021">
    <property type="entry name" value="NPL4"/>
    <property type="match status" value="1"/>
</dbReference>
<dbReference type="Pfam" id="PF05020">
    <property type="entry name" value="zf-NPL4"/>
    <property type="match status" value="1"/>
</dbReference>
<dbReference type="PIRSF" id="PIRSF010052">
    <property type="entry name" value="Polyub_prc_Npl4"/>
    <property type="match status" value="1"/>
</dbReference>
<dbReference type="SUPFAM" id="SSF54236">
    <property type="entry name" value="Ubiquitin-like"/>
    <property type="match status" value="1"/>
</dbReference>
<dbReference type="PROSITE" id="PS50249">
    <property type="entry name" value="MPN"/>
    <property type="match status" value="1"/>
</dbReference>
<name>NPL4_ASPFU</name>
<protein>
    <recommendedName>
        <fullName>Nuclear protein localization protein 4</fullName>
    </recommendedName>
</protein>
<feature type="chain" id="PRO_0000339434" description="Nuclear protein localization protein 4">
    <location>
        <begin position="1"/>
        <end position="652"/>
    </location>
</feature>
<feature type="domain" description="MPN" evidence="2">
    <location>
        <begin position="265"/>
        <end position="402"/>
    </location>
</feature>
<feature type="region of interest" description="Disordered" evidence="3">
    <location>
        <begin position="601"/>
        <end position="652"/>
    </location>
</feature>
<feature type="compositionally biased region" description="Basic and acidic residues" evidence="3">
    <location>
        <begin position="633"/>
        <end position="643"/>
    </location>
</feature>
<proteinExistence type="inferred from homology"/>
<accession>Q4WKD7</accession>
<organism>
    <name type="scientific">Aspergillus fumigatus (strain ATCC MYA-4609 / CBS 101355 / FGSC A1100 / Af293)</name>
    <name type="common">Neosartorya fumigata</name>
    <dbReference type="NCBI Taxonomy" id="330879"/>
    <lineage>
        <taxon>Eukaryota</taxon>
        <taxon>Fungi</taxon>
        <taxon>Dikarya</taxon>
        <taxon>Ascomycota</taxon>
        <taxon>Pezizomycotina</taxon>
        <taxon>Eurotiomycetes</taxon>
        <taxon>Eurotiomycetidae</taxon>
        <taxon>Eurotiales</taxon>
        <taxon>Aspergillaceae</taxon>
        <taxon>Aspergillus</taxon>
        <taxon>Aspergillus subgen. Fumigati</taxon>
    </lineage>
</organism>
<keyword id="KW-0963">Cytoplasm</keyword>
<keyword id="KW-0256">Endoplasmic reticulum</keyword>
<keyword id="KW-0472">Membrane</keyword>
<keyword id="KW-0509">mRNA transport</keyword>
<keyword id="KW-0539">Nucleus</keyword>
<keyword id="KW-0653">Protein transport</keyword>
<keyword id="KW-1185">Reference proteome</keyword>
<keyword id="KW-0811">Translocation</keyword>
<keyword id="KW-0813">Transport</keyword>